<keyword id="KW-0025">Alternative splicing</keyword>
<keyword id="KW-1003">Cell membrane</keyword>
<keyword id="KW-1015">Disulfide bond</keyword>
<keyword id="KW-0325">Glycoprotein</keyword>
<keyword id="KW-0407">Ion channel</keyword>
<keyword id="KW-0406">Ion transport</keyword>
<keyword id="KW-0472">Membrane</keyword>
<keyword id="KW-0597">Phosphoprotein</keyword>
<keyword id="KW-1185">Reference proteome</keyword>
<keyword id="KW-0677">Repeat</keyword>
<keyword id="KW-0915">Sodium</keyword>
<keyword id="KW-0894">Sodium channel</keyword>
<keyword id="KW-0739">Sodium transport</keyword>
<keyword id="KW-0812">Transmembrane</keyword>
<keyword id="KW-1133">Transmembrane helix</keyword>
<keyword id="KW-0813">Transport</keyword>
<keyword id="KW-0832">Ubl conjugation</keyword>
<keyword id="KW-0851">Voltage-gated channel</keyword>
<evidence type="ECO:0000250" key="1"/>
<evidence type="ECO:0000250" key="2">
    <source>
        <dbReference type="UniProtKB" id="D0E0C2"/>
    </source>
</evidence>
<evidence type="ECO:0000250" key="3">
    <source>
        <dbReference type="UniProtKB" id="P15389"/>
    </source>
</evidence>
<evidence type="ECO:0000250" key="4">
    <source>
        <dbReference type="UniProtKB" id="Q14524"/>
    </source>
</evidence>
<evidence type="ECO:0000255" key="5"/>
<evidence type="ECO:0000256" key="6">
    <source>
        <dbReference type="SAM" id="MobiDB-lite"/>
    </source>
</evidence>
<evidence type="ECO:0000269" key="7">
    <source>
    </source>
</evidence>
<evidence type="ECO:0000269" key="8">
    <source>
    </source>
</evidence>
<evidence type="ECO:0000303" key="9">
    <source>
    </source>
</evidence>
<evidence type="ECO:0000305" key="10"/>
<evidence type="ECO:0000305" key="11">
    <source>
    </source>
</evidence>
<evidence type="ECO:0000312" key="12">
    <source>
        <dbReference type="MGI" id="MGI:108029"/>
    </source>
</evidence>
<reference key="1">
    <citation type="journal article" date="2004" name="J. Biol. Chem.">
        <title>Novel isoforms of the sodium channels Nav1.8 and Nav1.5 are produced by a conserved mechanism in mouse and rat.</title>
        <authorList>
            <person name="Kerr N.C.H."/>
            <person name="Holmes F.E."/>
            <person name="Wynick D."/>
        </authorList>
    </citation>
    <scope>NUCLEOTIDE SEQUENCE [GENOMIC DNA / MRNA] OF 943-1090 (ISOFORMS 1 AND 2)</scope>
    <source>
        <strain>129P2</strain>
        <tissue>Spinal ganglion</tissue>
        <tissue>Trigeminal ganglion</tissue>
    </source>
</reference>
<reference key="2">
    <citation type="submission" date="1995-06" db="EMBL/GenBank/DDBJ databases">
        <title>Mouse sodium channel clone BC in pSB+.</title>
        <authorList>
            <person name="Jover E."/>
            <person name="Shah V."/>
        </authorList>
    </citation>
    <scope>NUCLEOTIDE SEQUENCE (ISOFORM 3)</scope>
    <source>
        <strain>C3H/HeJ</strain>
    </source>
</reference>
<reference key="3">
    <citation type="submission" date="2004-02" db="EMBL/GenBank/DDBJ databases">
        <title>cDNA cloning of the mouse sensory neuron specific sodium channel Nav1.8 (Scn10a).</title>
        <authorList>
            <person name="Puhl H.L. III"/>
            <person name="King M.M."/>
            <person name="Ikeda S.R."/>
        </authorList>
    </citation>
    <scope>NUCLEOTIDE SEQUENCE (ISOFORM 2)</scope>
    <source>
        <strain>CD-1</strain>
        <tissue>Spinal ganglion</tissue>
    </source>
</reference>
<reference key="4">
    <citation type="journal article" date="2004" name="J. Biol. Chem.">
        <title>Regulation of neuronal voltage-gated sodium channels by the ubiquitin-protein ligases Nedd4 and Nedd4-2.</title>
        <authorList>
            <person name="Fotia A.B."/>
            <person name="Ekberg J."/>
            <person name="Adams D.J."/>
            <person name="Cook D.I."/>
            <person name="Poronnik P."/>
            <person name="Kumar S."/>
        </authorList>
    </citation>
    <scope>INTERACTION WITH NEDD4 AND NEDD4L</scope>
    <scope>PROBABLE UBIQUITINATION</scope>
    <scope>MUTAGENESIS OF TYR-1922</scope>
</reference>
<reference key="5">
    <citation type="journal article" date="2013" name="Science">
        <title>Voltage-gated sodium channel in grasshopper mice defends against bark scorpion toxin.</title>
        <authorList>
            <person name="Rowe A.H."/>
            <person name="Xiao Y."/>
            <person name="Rowe M.P."/>
            <person name="Cummins T.R."/>
            <person name="Zakon H.H."/>
        </authorList>
    </citation>
    <scope>FUNCTION</scope>
    <scope>TRANSPORTER ACTIVITY</scope>
    <scope>MUTAGENESIS OF GLN-861</scope>
</reference>
<gene>
    <name evidence="12" type="primary">Scn10a</name>
    <name type="synonym">Sns</name>
</gene>
<accession>Q6QIY3</accession>
<accession>Q62243</accession>
<accession>Q6EWG7</accession>
<accession>Q6KCH7</accession>
<accession>Q703F9</accession>
<name>SCNAA_MOUSE</name>
<organism>
    <name type="scientific">Mus musculus</name>
    <name type="common">Mouse</name>
    <dbReference type="NCBI Taxonomy" id="10090"/>
    <lineage>
        <taxon>Eukaryota</taxon>
        <taxon>Metazoa</taxon>
        <taxon>Chordata</taxon>
        <taxon>Craniata</taxon>
        <taxon>Vertebrata</taxon>
        <taxon>Euteleostomi</taxon>
        <taxon>Mammalia</taxon>
        <taxon>Eutheria</taxon>
        <taxon>Euarchontoglires</taxon>
        <taxon>Glires</taxon>
        <taxon>Rodentia</taxon>
        <taxon>Myomorpha</taxon>
        <taxon>Muroidea</taxon>
        <taxon>Muridae</taxon>
        <taxon>Murinae</taxon>
        <taxon>Mus</taxon>
        <taxon>Mus</taxon>
    </lineage>
</organism>
<comment type="function">
    <text evidence="8">Tetrodotoxin-resistant channel that mediates the voltage-dependent sodium ion permeability of excitable membranes. Assuming opened or closed conformations in response to the voltage difference across the membrane, the protein forms a sodium-selective channel through which sodium ions may pass in accordance with their electrochemical gradient. Plays a role in neuropathic pain mechanisms.</text>
</comment>
<comment type="catalytic activity">
    <reaction evidence="8">
        <text>Na(+)(in) = Na(+)(out)</text>
        <dbReference type="Rhea" id="RHEA:34963"/>
        <dbReference type="ChEBI" id="CHEBI:29101"/>
    </reaction>
</comment>
<comment type="subunit">
    <text evidence="1 7">The channel consists of an ion conducting pore forming alpha-subunit regulated by one or more associated auxiliary subunits SCN1B, SCN2B and SCN3B; electrophysiological properties may vary depending on the type of the associated beta subunits. Found in a number of complexes with PRX, DYNLT1 and PDZD2. Interacts with proteins such as FSTL1, PRX, DYNLT1, PDZD2, S100A10 and many others (By similarity). Interacts with NEDD4 and NEDD4L.</text>
</comment>
<comment type="subcellular location">
    <subcellularLocation>
        <location evidence="2">Cell membrane</location>
        <topology evidence="2">Multi-pass membrane protein</topology>
    </subcellularLocation>
    <text evidence="1">It can be translocated to the cell membrane through association with S100A10.</text>
</comment>
<comment type="alternative products">
    <event type="alternative splicing"/>
    <isoform>
        <id>Q6QIY3-1</id>
        <name>1</name>
        <sequence type="displayed"/>
    </isoform>
    <isoform>
        <id>Q6QIY3-2</id>
        <name>2</name>
        <name>Nav1.8c</name>
        <sequence type="described" ref="VSP_012257"/>
    </isoform>
    <isoform>
        <id>Q6QIY3-3</id>
        <name>3</name>
        <sequence type="described" ref="VSP_012256"/>
    </isoform>
</comment>
<comment type="tissue specificity">
    <text>Expressed in dorsal root ganglion and trigeminal ganglion.</text>
</comment>
<comment type="domain">
    <text evidence="10">The sequence contains 4 internal repeats, each with 5 hydrophobic segments (S1, S2, S3, S5, S6) and one positively charged segment (S4). Segments S4 are probably the voltage-sensors and are characterized by a series of positively charged amino acids at every third position.</text>
</comment>
<comment type="PTM">
    <text evidence="10">Ubiquitinated by NEDD4L; which promotes its endocytosis.</text>
</comment>
<comment type="PTM">
    <text evidence="1">Phosphorylation at Ser-1452 by PKC in a highly conserved cytoplasmic loop slows inactivation of the sodium channel and reduces peak sodium currents.</text>
</comment>
<comment type="PTM">
    <text evidence="3">Lacks the cysteine which covalently binds the conotoxin GVIIJ. This cysteine (position 815) is speculated in other sodium channel subunits alpha to be implied in covalent binding with the sodium channel subunit beta-2 or beta-4.</text>
</comment>
<comment type="miscellaneous">
    <text evidence="11">Mus musculus is sensitive to the pain-inducing components of the bark scorpion (Centruroides sculpturatus) venom while Onychomys torridus is not. Gln-861 may account for the difference between both rodents and its replacement by a glutamate, the corresponding amino acid found in the Onychomys torridus ortholog, allows inhibition of Snc10a by the venom, which in turn, inhibits sodium currents, blocks action potential propagation and may induce analgesia (PubMed:24159039).</text>
</comment>
<comment type="similarity">
    <text evidence="10">Belongs to the sodium channel (TC 1.A.1.10) family. Nav1.8/SCN10A subfamily.</text>
</comment>
<feature type="chain" id="PRO_0000048508" description="Sodium channel protein type 10 subunit alpha">
    <location>
        <begin position="1"/>
        <end position="1958"/>
    </location>
</feature>
<feature type="topological domain" description="Cytoplasmic" evidence="10">
    <location>
        <begin position="1"/>
        <end position="125"/>
    </location>
</feature>
<feature type="transmembrane region" description="Helical; Name=S1 of repeat I" evidence="5">
    <location>
        <begin position="126"/>
        <end position="149"/>
    </location>
</feature>
<feature type="topological domain" description="Extracellular" evidence="10">
    <location>
        <begin position="150"/>
        <end position="154"/>
    </location>
</feature>
<feature type="transmembrane region" description="Helical; Name=S2 of repeat I" evidence="5">
    <location>
        <begin position="155"/>
        <end position="174"/>
    </location>
</feature>
<feature type="topological domain" description="Cytoplasmic" evidence="10">
    <location>
        <begin position="175"/>
        <end position="187"/>
    </location>
</feature>
<feature type="transmembrane region" description="Helical; Name=S3 of repeat I" evidence="5">
    <location>
        <begin position="188"/>
        <end position="206"/>
    </location>
</feature>
<feature type="topological domain" description="Extracellular" evidence="10">
    <location>
        <begin position="207"/>
        <end position="212"/>
    </location>
</feature>
<feature type="transmembrane region" description="Helical; Voltage-sensor; Name=S4 of repeat I" evidence="5">
    <location>
        <begin position="213"/>
        <end position="232"/>
    </location>
</feature>
<feature type="topological domain" description="Cytoplasmic" evidence="10">
    <location>
        <begin position="233"/>
        <end position="248"/>
    </location>
</feature>
<feature type="transmembrane region" description="Helical; Name=S5 of repeat I" evidence="5">
    <location>
        <begin position="249"/>
        <end position="272"/>
    </location>
</feature>
<feature type="topological domain" description="Extracellular" evidence="10">
    <location>
        <begin position="273"/>
        <end position="340"/>
    </location>
</feature>
<feature type="intramembrane region" description="Pore-forming" evidence="2">
    <location>
        <begin position="341"/>
        <end position="365"/>
    </location>
</feature>
<feature type="topological domain" description="Extracellular" evidence="10">
    <location>
        <begin position="366"/>
        <end position="372"/>
    </location>
</feature>
<feature type="transmembrane region" description="Helical; Name=S6 of repeat I" evidence="5">
    <location>
        <begin position="373"/>
        <end position="398"/>
    </location>
</feature>
<feature type="topological domain" description="Cytoplasmic" evidence="10">
    <location>
        <begin position="399"/>
        <end position="658"/>
    </location>
</feature>
<feature type="transmembrane region" description="Helical; Name=S1 of repeat II" evidence="5">
    <location>
        <begin position="659"/>
        <end position="683"/>
    </location>
</feature>
<feature type="topological domain" description="Extracellular" evidence="10">
    <location>
        <begin position="684"/>
        <end position="694"/>
    </location>
</feature>
<feature type="transmembrane region" description="Helical; Name=S2 of repeat II" evidence="5">
    <location>
        <begin position="695"/>
        <end position="718"/>
    </location>
</feature>
<feature type="topological domain" description="Cytoplasmic" evidence="10">
    <location>
        <begin position="719"/>
        <end position="726"/>
    </location>
</feature>
<feature type="transmembrane region" description="Helical; Name=S3 of repeat II" evidence="5">
    <location>
        <begin position="727"/>
        <end position="746"/>
    </location>
</feature>
<feature type="topological domain" description="Extracellular" evidence="10">
    <location>
        <begin position="747"/>
        <end position="752"/>
    </location>
</feature>
<feature type="transmembrane region" description="Helical; Voltage-sensor; Name=S4 of repeat II" evidence="5">
    <location>
        <begin position="753"/>
        <end position="772"/>
    </location>
</feature>
<feature type="topological domain" description="Cytoplasmic" evidence="10">
    <location>
        <begin position="773"/>
        <end position="788"/>
    </location>
</feature>
<feature type="transmembrane region" description="Helical; Name=S5 of repeat II" evidence="5">
    <location>
        <begin position="789"/>
        <end position="809"/>
    </location>
</feature>
<feature type="topological domain" description="Extracellular" evidence="10">
    <location>
        <begin position="810"/>
        <end position="833"/>
    </location>
</feature>
<feature type="intramembrane region" description="Pore-forming" evidence="2">
    <location>
        <begin position="834"/>
        <end position="854"/>
    </location>
</feature>
<feature type="topological domain" description="Extracellular" evidence="10">
    <location>
        <begin position="855"/>
        <end position="863"/>
    </location>
</feature>
<feature type="transmembrane region" description="Helical; Name=S6 of repeat II" evidence="5">
    <location>
        <begin position="864"/>
        <end position="889"/>
    </location>
</feature>
<feature type="topological domain" description="Cytoplasmic" evidence="10">
    <location>
        <begin position="890"/>
        <end position="1148"/>
    </location>
</feature>
<feature type="transmembrane region" description="Helical; Name=S1 of repeat III" evidence="5">
    <location>
        <begin position="1149"/>
        <end position="1172"/>
    </location>
</feature>
<feature type="topological domain" description="Extracellular" evidence="10">
    <location>
        <begin position="1173"/>
        <end position="1185"/>
    </location>
</feature>
<feature type="transmembrane region" description="Helical; Name=S2 of repeat III" evidence="5">
    <location>
        <begin position="1186"/>
        <end position="1211"/>
    </location>
</feature>
<feature type="topological domain" description="Cytoplasmic" evidence="10">
    <location>
        <begin position="1212"/>
        <end position="1217"/>
    </location>
</feature>
<feature type="transmembrane region" description="Helical; Name=S3 of repeat III" evidence="5">
    <location>
        <begin position="1218"/>
        <end position="1239"/>
    </location>
</feature>
<feature type="topological domain" description="Extracellular" evidence="10">
    <location>
        <begin position="1240"/>
        <end position="1243"/>
    </location>
</feature>
<feature type="transmembrane region" description="Helical; Voltage-sensor; Name=S4 of repeat III" evidence="5">
    <location>
        <begin position="1244"/>
        <end position="1265"/>
    </location>
</feature>
<feature type="topological domain" description="Cytoplasmic" evidence="10">
    <location>
        <begin position="1266"/>
        <end position="1284"/>
    </location>
</feature>
<feature type="transmembrane region" description="Helical; Name=S5 of repeat III" evidence="5">
    <location>
        <begin position="1285"/>
        <end position="1312"/>
    </location>
</feature>
<feature type="topological domain" description="Extracellular" evidence="10">
    <location>
        <begin position="1313"/>
        <end position="1354"/>
    </location>
</feature>
<feature type="intramembrane region" description="Pore-forming" evidence="2">
    <location>
        <begin position="1355"/>
        <end position="1376"/>
    </location>
</feature>
<feature type="topological domain" description="Extracellular" evidence="10">
    <location>
        <begin position="1377"/>
        <end position="1392"/>
    </location>
</feature>
<feature type="transmembrane region" description="Helical; Name=S6 of repeat III" evidence="5">
    <location>
        <begin position="1393"/>
        <end position="1419"/>
    </location>
</feature>
<feature type="topological domain" description="Cytoplasmic" evidence="10">
    <location>
        <begin position="1420"/>
        <end position="1472"/>
    </location>
</feature>
<feature type="transmembrane region" description="Helical; Name=S1 of repeat IV" evidence="5">
    <location>
        <begin position="1473"/>
        <end position="1496"/>
    </location>
</feature>
<feature type="topological domain" description="Extracellular" evidence="10">
    <location>
        <begin position="1497"/>
        <end position="1507"/>
    </location>
</feature>
<feature type="transmembrane region" description="Helical; Name=S2 of repeat IV" evidence="5">
    <location>
        <begin position="1508"/>
        <end position="1531"/>
    </location>
</feature>
<feature type="topological domain" description="Cytoplasmic" evidence="10">
    <location>
        <begin position="1532"/>
        <end position="1537"/>
    </location>
</feature>
<feature type="transmembrane region" description="Helical; Name=S3 of repeat IV" evidence="5">
    <location>
        <begin position="1538"/>
        <end position="1561"/>
    </location>
</feature>
<feature type="topological domain" description="Extracellular" evidence="10">
    <location>
        <begin position="1562"/>
        <end position="1573"/>
    </location>
</feature>
<feature type="transmembrane region" description="Helical; Voltage-sensor; Name=S4 of repeat IV" evidence="5">
    <location>
        <begin position="1574"/>
        <end position="1595"/>
    </location>
</feature>
<feature type="topological domain" description="Cytoplasmic" evidence="10">
    <location>
        <begin position="1596"/>
        <end position="1610"/>
    </location>
</feature>
<feature type="transmembrane region" description="Helical; Name=S5 of repeat IV" evidence="5">
    <location>
        <begin position="1611"/>
        <end position="1633"/>
    </location>
</feature>
<feature type="topological domain" description="Extracellular" evidence="10">
    <location>
        <begin position="1634"/>
        <end position="1647"/>
    </location>
</feature>
<feature type="intramembrane region" description="Pore-forming" evidence="2">
    <location>
        <begin position="1648"/>
        <end position="1670"/>
    </location>
</feature>
<feature type="topological domain" description="Extracellular" evidence="10">
    <location>
        <begin position="1671"/>
        <end position="1698"/>
    </location>
</feature>
<feature type="transmembrane region" description="Helical; Name=S6 of repeat IV" evidence="5">
    <location>
        <begin position="1699"/>
        <end position="1723"/>
    </location>
</feature>
<feature type="topological domain" description="Cytoplasmic" evidence="10">
    <location>
        <begin position="1724"/>
        <end position="1958"/>
    </location>
</feature>
<feature type="repeat" description="I" evidence="10">
    <location>
        <begin position="116"/>
        <end position="404"/>
    </location>
</feature>
<feature type="repeat" description="II" evidence="10">
    <location>
        <begin position="646"/>
        <end position="910"/>
    </location>
</feature>
<feature type="repeat" description="III" evidence="10">
    <location>
        <begin position="1141"/>
        <end position="1450"/>
    </location>
</feature>
<feature type="repeat" description="IV" evidence="10">
    <location>
        <begin position="1459"/>
        <end position="1758"/>
    </location>
</feature>
<feature type="domain" description="IQ">
    <location>
        <begin position="1852"/>
        <end position="1881"/>
    </location>
</feature>
<feature type="region of interest" description="Disordered" evidence="6">
    <location>
        <begin position="27"/>
        <end position="54"/>
    </location>
</feature>
<feature type="region of interest" description="Disordered" evidence="6">
    <location>
        <begin position="444"/>
        <end position="483"/>
    </location>
</feature>
<feature type="region of interest" description="Disordered" evidence="6">
    <location>
        <begin position="539"/>
        <end position="583"/>
    </location>
</feature>
<feature type="region of interest" description="Disordered" evidence="6">
    <location>
        <begin position="1006"/>
        <end position="1094"/>
    </location>
</feature>
<feature type="region of interest" description="Disordered" evidence="6">
    <location>
        <begin position="1901"/>
        <end position="1958"/>
    </location>
</feature>
<feature type="compositionally biased region" description="Basic residues" evidence="6">
    <location>
        <begin position="32"/>
        <end position="42"/>
    </location>
</feature>
<feature type="compositionally biased region" description="Basic and acidic residues" evidence="6">
    <location>
        <begin position="43"/>
        <end position="54"/>
    </location>
</feature>
<feature type="compositionally biased region" description="Pro residues" evidence="6">
    <location>
        <begin position="549"/>
        <end position="560"/>
    </location>
</feature>
<feature type="compositionally biased region" description="Polar residues" evidence="6">
    <location>
        <begin position="1017"/>
        <end position="1038"/>
    </location>
</feature>
<feature type="compositionally biased region" description="Polar residues" evidence="6">
    <location>
        <begin position="1933"/>
        <end position="1942"/>
    </location>
</feature>
<feature type="compositionally biased region" description="Basic and acidic residues" evidence="6">
    <location>
        <begin position="1947"/>
        <end position="1958"/>
    </location>
</feature>
<feature type="modified residue" description="Phosphoserine" evidence="4">
    <location>
        <position position="440"/>
    </location>
</feature>
<feature type="modified residue" description="Phosphoserine" evidence="4">
    <location>
        <position position="443"/>
    </location>
</feature>
<feature type="modified residue" description="Phosphoserine" evidence="4">
    <location>
        <position position="466"/>
    </location>
</feature>
<feature type="modified residue" description="Phosphoserine" evidence="4">
    <location>
        <position position="478"/>
    </location>
</feature>
<feature type="modified residue" description="Phosphoserine" evidence="4">
    <location>
        <position position="611"/>
    </location>
</feature>
<feature type="modified residue" description="Phosphoserine" evidence="4">
    <location>
        <position position="614"/>
    </location>
</feature>
<feature type="modified residue" description="Phosphoserine; by PKC" evidence="4">
    <location>
        <position position="1452"/>
    </location>
</feature>
<feature type="glycosylation site" description="N-linked (GlcNAc...) asparagine" evidence="5">
    <location>
        <position position="279"/>
    </location>
</feature>
<feature type="glycosylation site" description="N-linked (GlcNAc...) asparagine" evidence="5">
    <location>
        <position position="288"/>
    </location>
</feature>
<feature type="glycosylation site" description="N-linked (GlcNAc...) asparagine" evidence="5">
    <location>
        <position position="311"/>
    </location>
</feature>
<feature type="glycosylation site" description="N-linked (GlcNAc...) asparagine" evidence="5">
    <location>
        <position position="334"/>
    </location>
</feature>
<feature type="glycosylation site" description="N-linked (GlcNAc...) asparagine" evidence="5">
    <location>
        <position position="1323"/>
    </location>
</feature>
<feature type="glycosylation site" description="N-linked (GlcNAc...) asparagine" evidence="5">
    <location>
        <position position="1329"/>
    </location>
</feature>
<feature type="glycosylation site" description="N-linked (GlcNAc...) asparagine" evidence="5">
    <location>
        <position position="1337"/>
    </location>
</feature>
<feature type="glycosylation site" description="N-linked (GlcNAc...) asparagine" evidence="5">
    <location>
        <position position="1500"/>
    </location>
</feature>
<feature type="glycosylation site" description="N-linked (GlcNAc...) asparagine" evidence="5">
    <location>
        <position position="1687"/>
    </location>
</feature>
<feature type="disulfide bond" evidence="2">
    <location>
        <begin position="276"/>
        <end position="318"/>
    </location>
</feature>
<feature type="disulfide bond" evidence="2">
    <location>
        <begin position="856"/>
        <end position="865"/>
    </location>
</feature>
<feature type="splice variant" id="VSP_012256" description="In isoform 3." evidence="10">
    <location>
        <begin position="1"/>
        <end position="1435"/>
    </location>
</feature>
<feature type="splice variant" id="VSP_012257" description="In isoform 2." evidence="9">
    <location>
        <position position="1030"/>
    </location>
</feature>
<feature type="mutagenesis site" description="Sensitive to inhibition by some components of the venom of Centruroides sculpturatus." evidence="8">
    <original>Q</original>
    <variation>E</variation>
    <location>
        <position position="861"/>
    </location>
</feature>
<feature type="mutagenesis site" description="No regulation by NEDD4L." evidence="7">
    <original>Y</original>
    <variation>A</variation>
    <location>
        <position position="1922"/>
    </location>
</feature>
<proteinExistence type="evidence at protein level"/>
<sequence>MEFPFGSVGTTNFRRFTPESLAEIEKQIAAHRAAKKGRPKQRGQKDKSEKPRPQLDLKACNQLPRFYGELPAELVGEPLEDLDPFYSTHRTFIVLDKSRTISRFSATWALWLFSPFNLIRRTAIKVSVHSWFSIFITVTILVNCVCMTRTDLPEKLEYAFTVVYTFEALIKILARGFCLNEFTYLRDPWNWLDFSVITLAYVGAAIDLRGISGLRTFRVLRALKTVSVIPGLKVIVGALIHSVRKLADVTILTVFCLSVFALVGLQLFKGNLKNKCIKNGTDPHKADNLSSEMAGDIFIKPGTTDPLLCGNGSDAGHCPNDYVCRKTSDNPDFNYTSFDSFAWAFLSLFRLMTQDSWERLYQQTLRASGKMYMVFFVLVIFLGSFYLVNLILAVVTMAYEEQSQATIAEIEAKEKKFKEALEVLQKEQEVLAALGIDTTSLYSHNGSPLAPKNANERRPRVKSRMSEGSTDDNRSLQSDPYNQRRMSFLGLSSGRRRASHSSVFHFRAPSQDVSFPDGILDDGVFHGDQESRRSSILLGRGAGQAGPLPRSPLPQSPNPGPRRGEEGQRGVPTGELATGAPEGPALDAAGQKNFLSADYLNEPFRAQRAMSVVSIMTSVIEELEESKLKCPPCLISLAQKYLIWECCPKWKKFKMVLFELVTDPFAELTITLCIVVNTVFMAMEHYPMTDAFDAMLQAGNIVFTVFFTMEMAFKIIAFDPYYYFQKKWNIFDCVIVTVSLLELSTSKKGSLSVLRTFRLLRVFKLAKSWPTLNMLIKIIGNSVGALGNLTFILAIIVFIFALVGKQLLSENYGCRRDGISVWNGERLRWHMCDFFHSFLVVFRILCGEWIENMWVCMEVSQDYICLTLFLTVMVLGNLVVLNLFIALLLNSFSADNLTAPEDDGEVNNLQVALARIQVFGHRASRAITSYIRSHCRLRWPKVETQLGMKPPLTSCKAENHIATDAVNAAVGNLAKPALGGPKENHGDFITDPNVWVSVPIAEGESDLDELEEDVEHASQSSWQEESPKGQQELLQQVQKCEDHQAARSPPSGMSSEDLAPYLGERWQREESPRVPAEGVDDTSSSEGSTVDCPDPEEILRKIPELAEELDEPDDCFPEGCTRRCPCCKVNTSKFPWATGWQVRKTCYRIVEHSWFESFIIFMILLSSGALAFEDNYLEEKPRVKSVLEYTDRVFTFIFVFEMLLKWVAYGFKKYFTNAWCWLDFLIVNISLTSLIAKILEYSDVASIKALRTLRALRPLRALSRFEGMRVVVDALVGAIPSIMNVLLVCLIFWLIFSIMGVNLFAGKFSRCVDTRSNPFSVVNSTFVTNKSDCYNQNNTGHFFWVNVKVNFDNVAMGYLALLQVATFKGWMDIMYAAVDSRDINSQPNWEESLYMYLYFVVFIIFGGFFTLNLFVGVIIDNFNQQKKKLGGQDIFMTEEQKKYYNAMKKLGSKKPQKPIPRPLNKYQGFVFDIVTRQAFDIIIMALICLNMITMMVETDNQSEEKTKVLGRINQFFVAVFTGECVMKMFALRQYYFTNGWNVFDFIVVILSISSLLFSAILSSLESYFSPTLLRVIRLARIGRILRLIRAAKGIRTLLFALMMSLPALFNIGLLLFLVMFIYSIFGMASFANVIDEAGIDDMFNFKTFGNSMLCLFQITTSAGWDGLLSPILNTGPPYCDPNRPNSNGSKGNCGSPAVGILFFTTYIIISFLIVVNMYIAVILENFNVATEESTEPLSEDDFDMFYETWEKFDPEATQFIAFSALSDFADTLSGPLRIPKPNQNILIQMDLPLVPGDKIHCLDILFAFTKNVLGESGELDSLKTNMEEKFMATNLSKASYEPIATTLRCKQEDISATIIQKAYRNYMLQRSLMLSNPLHVPRAEEDGVSLPREGYVTFMANDNGGLPDKSETASATSFPPSYDSVTRGLSDRANISTSSSMQNEDEVTAKEGKSPGPQ</sequence>
<dbReference type="EMBL" id="AJ622906">
    <property type="protein sequence ID" value="CAF22039.1"/>
    <property type="molecule type" value="Genomic_DNA"/>
</dbReference>
<dbReference type="EMBL" id="AJ623269">
    <property type="protein sequence ID" value="CAF25039.1"/>
    <property type="molecule type" value="mRNA"/>
</dbReference>
<dbReference type="EMBL" id="AJ623270">
    <property type="protein sequence ID" value="CAF25040.1"/>
    <property type="molecule type" value="mRNA"/>
</dbReference>
<dbReference type="EMBL" id="L42342">
    <property type="protein sequence ID" value="AAA68000.1"/>
    <property type="molecule type" value="mRNA"/>
</dbReference>
<dbReference type="EMBL" id="AY538273">
    <property type="protein sequence ID" value="AAS45602.1"/>
    <property type="molecule type" value="mRNA"/>
</dbReference>
<dbReference type="CCDS" id="CCDS57716.1">
    <molecule id="Q6QIY3-1"/>
</dbReference>
<dbReference type="CCDS" id="CCDS90682.1">
    <molecule id="Q6QIY3-2"/>
</dbReference>
<dbReference type="RefSeq" id="NP_033160.2">
    <molecule id="Q6QIY3-2"/>
    <property type="nucleotide sequence ID" value="NM_009134.3"/>
</dbReference>
<dbReference type="RefSeq" id="XP_017168712.1">
    <molecule id="Q6QIY3-1"/>
    <property type="nucleotide sequence ID" value="XM_017313223.1"/>
</dbReference>
<dbReference type="SMR" id="Q6QIY3"/>
<dbReference type="BioGRID" id="203097">
    <property type="interactions" value="9"/>
</dbReference>
<dbReference type="FunCoup" id="Q6QIY3">
    <property type="interactions" value="54"/>
</dbReference>
<dbReference type="STRING" id="10090.ENSMUSP00000081845"/>
<dbReference type="BindingDB" id="Q6QIY3"/>
<dbReference type="ChEMBL" id="CHEMBL5158"/>
<dbReference type="GlyCosmos" id="Q6QIY3">
    <property type="glycosylation" value="9 sites, No reported glycans"/>
</dbReference>
<dbReference type="GlyGen" id="Q6QIY3">
    <property type="glycosylation" value="9 sites"/>
</dbReference>
<dbReference type="iPTMnet" id="Q6QIY3"/>
<dbReference type="PhosphoSitePlus" id="Q6QIY3"/>
<dbReference type="PaxDb" id="10090-ENSMUSP00000081845"/>
<dbReference type="ProteomicsDB" id="256752">
    <molecule id="Q6QIY3-1"/>
</dbReference>
<dbReference type="ProteomicsDB" id="256753">
    <molecule id="Q6QIY3-2"/>
</dbReference>
<dbReference type="ProteomicsDB" id="256754">
    <molecule id="Q6QIY3-3"/>
</dbReference>
<dbReference type="ABCD" id="Q6QIY3">
    <property type="antibodies" value="1 sequenced antibody"/>
</dbReference>
<dbReference type="Antibodypedia" id="28790">
    <property type="antibodies" value="227 antibodies from 29 providers"/>
</dbReference>
<dbReference type="DNASU" id="20264"/>
<dbReference type="Ensembl" id="ENSMUST00000213392.2">
    <molecule id="Q6QIY3-2"/>
    <property type="protein sequence ID" value="ENSMUSP00000148987.2"/>
    <property type="gene ID" value="ENSMUSG00000034533.11"/>
</dbReference>
<dbReference type="GeneID" id="20264"/>
<dbReference type="KEGG" id="mmu:20264"/>
<dbReference type="UCSC" id="uc009sbf.2">
    <molecule id="Q6QIY3-3"/>
    <property type="organism name" value="mouse"/>
</dbReference>
<dbReference type="UCSC" id="uc009sbg.3">
    <molecule id="Q6QIY3-2"/>
    <property type="organism name" value="mouse"/>
</dbReference>
<dbReference type="AGR" id="MGI:108029"/>
<dbReference type="CTD" id="6336"/>
<dbReference type="MGI" id="MGI:108029">
    <property type="gene designation" value="Scn10a"/>
</dbReference>
<dbReference type="VEuPathDB" id="HostDB:ENSMUSG00000034533"/>
<dbReference type="eggNOG" id="KOG2301">
    <property type="taxonomic scope" value="Eukaryota"/>
</dbReference>
<dbReference type="GeneTree" id="ENSGT00940000154992"/>
<dbReference type="InParanoid" id="Q6QIY3"/>
<dbReference type="OrthoDB" id="2984333at2759"/>
<dbReference type="PhylomeDB" id="Q6QIY3"/>
<dbReference type="BioGRID-ORCS" id="20264">
    <property type="hits" value="1 hit in 78 CRISPR screens"/>
</dbReference>
<dbReference type="PRO" id="PR:Q6QIY3"/>
<dbReference type="Proteomes" id="UP000000589">
    <property type="component" value="Chromosome 9"/>
</dbReference>
<dbReference type="RNAct" id="Q6QIY3">
    <property type="molecule type" value="protein"/>
</dbReference>
<dbReference type="Bgee" id="ENSMUSG00000034533">
    <property type="expression patterns" value="Expressed in dorsal root ganglion and 15 other cell types or tissues"/>
</dbReference>
<dbReference type="ExpressionAtlas" id="Q6QIY3">
    <property type="expression patterns" value="baseline and differential"/>
</dbReference>
<dbReference type="GO" id="GO:0030424">
    <property type="term" value="C:axon"/>
    <property type="evidence" value="ECO:0000314"/>
    <property type="project" value="MGI"/>
</dbReference>
<dbReference type="GO" id="GO:0044299">
    <property type="term" value="C:C-fiber"/>
    <property type="evidence" value="ECO:0000314"/>
    <property type="project" value="MGI"/>
</dbReference>
<dbReference type="GO" id="GO:0005886">
    <property type="term" value="C:plasma membrane"/>
    <property type="evidence" value="ECO:0000314"/>
    <property type="project" value="MGI"/>
</dbReference>
<dbReference type="GO" id="GO:0001518">
    <property type="term" value="C:voltage-gated sodium channel complex"/>
    <property type="evidence" value="ECO:0007669"/>
    <property type="project" value="InterPro"/>
</dbReference>
<dbReference type="GO" id="GO:0005248">
    <property type="term" value="F:voltage-gated sodium channel activity"/>
    <property type="evidence" value="ECO:0000314"/>
    <property type="project" value="MGI"/>
</dbReference>
<dbReference type="GO" id="GO:0048266">
    <property type="term" value="P:behavioral response to pain"/>
    <property type="evidence" value="ECO:0000315"/>
    <property type="project" value="MGI"/>
</dbReference>
<dbReference type="GO" id="GO:0061337">
    <property type="term" value="P:cardiac conduction"/>
    <property type="evidence" value="ECO:0000315"/>
    <property type="project" value="MGI"/>
</dbReference>
<dbReference type="GO" id="GO:0007623">
    <property type="term" value="P:circadian rhythm"/>
    <property type="evidence" value="ECO:0000315"/>
    <property type="project" value="MGI"/>
</dbReference>
<dbReference type="GO" id="GO:0050974">
    <property type="term" value="P:detection of mechanical stimulus involved in sensory perception"/>
    <property type="evidence" value="ECO:0000315"/>
    <property type="project" value="MGI"/>
</dbReference>
<dbReference type="GO" id="GO:0050965">
    <property type="term" value="P:detection of temperature stimulus involved in sensory perception of pain"/>
    <property type="evidence" value="ECO:0000315"/>
    <property type="project" value="MGI"/>
</dbReference>
<dbReference type="GO" id="GO:0051649">
    <property type="term" value="P:establishment of localization in cell"/>
    <property type="evidence" value="ECO:0000314"/>
    <property type="project" value="MGI"/>
</dbReference>
<dbReference type="GO" id="GO:0086010">
    <property type="term" value="P:membrane depolarization during action potential"/>
    <property type="evidence" value="ECO:0000250"/>
    <property type="project" value="UniProtKB"/>
</dbReference>
<dbReference type="GO" id="GO:0060371">
    <property type="term" value="P:regulation of atrial cardiac muscle cell membrane depolarization"/>
    <property type="evidence" value="ECO:0000315"/>
    <property type="project" value="MGI"/>
</dbReference>
<dbReference type="GO" id="GO:0006814">
    <property type="term" value="P:sodium ion transport"/>
    <property type="evidence" value="ECO:0000314"/>
    <property type="project" value="MGI"/>
</dbReference>
<dbReference type="CDD" id="cd13433">
    <property type="entry name" value="Na_channel_gate"/>
    <property type="match status" value="1"/>
</dbReference>
<dbReference type="FunFam" id="1.10.238.10:FF:000002">
    <property type="entry name" value="Sodium channel protein"/>
    <property type="match status" value="1"/>
</dbReference>
<dbReference type="FunFam" id="1.10.287.70:FF:000001">
    <property type="entry name" value="Sodium channel protein"/>
    <property type="match status" value="1"/>
</dbReference>
<dbReference type="FunFam" id="1.20.120.350:FF:000002">
    <property type="entry name" value="Sodium channel protein"/>
    <property type="match status" value="1"/>
</dbReference>
<dbReference type="FunFam" id="1.20.120.350:FF:000004">
    <property type="entry name" value="Sodium channel protein"/>
    <property type="match status" value="1"/>
</dbReference>
<dbReference type="FunFam" id="1.20.120.350:FF:000049">
    <property type="entry name" value="Sodium channel protein"/>
    <property type="match status" value="1"/>
</dbReference>
<dbReference type="FunFam" id="1.20.5.1190:FF:000007">
    <property type="entry name" value="Sodium channel protein"/>
    <property type="match status" value="1"/>
</dbReference>
<dbReference type="FunFam" id="1.20.120.350:FF:000003">
    <property type="entry name" value="Voltage-dependent sodium channel"/>
    <property type="match status" value="1"/>
</dbReference>
<dbReference type="FunFam" id="1.10.287.70:FF:000049">
    <property type="entry name" value="Voltage-dependent sodium channel 2"/>
    <property type="match status" value="1"/>
</dbReference>
<dbReference type="Gene3D" id="1.10.287.70">
    <property type="match status" value="4"/>
</dbReference>
<dbReference type="Gene3D" id="1.10.238.10">
    <property type="entry name" value="EF-hand"/>
    <property type="match status" value="1"/>
</dbReference>
<dbReference type="Gene3D" id="1.20.5.1190">
    <property type="entry name" value="iswi atpase"/>
    <property type="match status" value="1"/>
</dbReference>
<dbReference type="Gene3D" id="1.20.120.350">
    <property type="entry name" value="Voltage-gated potassium channels. Chain C"/>
    <property type="match status" value="4"/>
</dbReference>
<dbReference type="InterPro" id="IPR005821">
    <property type="entry name" value="Ion_trans_dom"/>
</dbReference>
<dbReference type="InterPro" id="IPR001696">
    <property type="entry name" value="Na_channel_asu"/>
</dbReference>
<dbReference type="InterPro" id="IPR044564">
    <property type="entry name" value="Na_chnl_inactivation_gate"/>
</dbReference>
<dbReference type="InterPro" id="IPR010526">
    <property type="entry name" value="Na_trans_assoc_dom"/>
</dbReference>
<dbReference type="InterPro" id="IPR043203">
    <property type="entry name" value="VGCC_Ca_Na"/>
</dbReference>
<dbReference type="InterPro" id="IPR027359">
    <property type="entry name" value="Volt_channel_dom_sf"/>
</dbReference>
<dbReference type="PANTHER" id="PTHR10037:SF208">
    <property type="entry name" value="SODIUM CHANNEL PROTEIN TYPE 10 SUBUNIT ALPHA"/>
    <property type="match status" value="1"/>
</dbReference>
<dbReference type="PANTHER" id="PTHR10037">
    <property type="entry name" value="VOLTAGE-GATED CATION CHANNEL CALCIUM AND SODIUM"/>
    <property type="match status" value="1"/>
</dbReference>
<dbReference type="Pfam" id="PF00520">
    <property type="entry name" value="Ion_trans"/>
    <property type="match status" value="4"/>
</dbReference>
<dbReference type="Pfam" id="PF24609">
    <property type="entry name" value="IQ_SCN5A_C"/>
    <property type="match status" value="1"/>
</dbReference>
<dbReference type="Pfam" id="PF06512">
    <property type="entry name" value="Na_trans_assoc"/>
    <property type="match status" value="1"/>
</dbReference>
<dbReference type="PRINTS" id="PR00170">
    <property type="entry name" value="NACHANNEL"/>
</dbReference>
<dbReference type="SUPFAM" id="SSF81324">
    <property type="entry name" value="Voltage-gated potassium channels"/>
    <property type="match status" value="4"/>
</dbReference>
<protein>
    <recommendedName>
        <fullName>Sodium channel protein type 10 subunit alpha</fullName>
    </recommendedName>
    <alternativeName>
        <fullName>Peripheral nerve sodium channel 3</fullName>
        <shortName>PN3</shortName>
    </alternativeName>
    <alternativeName>
        <fullName>Sensory neuron sodium channel</fullName>
    </alternativeName>
    <alternativeName>
        <fullName>Sodium channel protein type X subunit alpha</fullName>
    </alternativeName>
    <alternativeName>
        <fullName>Voltage-gated sodium channel subunit alpha Nav1.8</fullName>
    </alternativeName>
</protein>